<evidence type="ECO:0000255" key="1">
    <source>
        <dbReference type="HAMAP-Rule" id="MF_01152"/>
    </source>
</evidence>
<organism>
    <name type="scientific">Edwardsiella ictaluri (strain 93-146)</name>
    <dbReference type="NCBI Taxonomy" id="634503"/>
    <lineage>
        <taxon>Bacteria</taxon>
        <taxon>Pseudomonadati</taxon>
        <taxon>Pseudomonadota</taxon>
        <taxon>Gammaproteobacteria</taxon>
        <taxon>Enterobacterales</taxon>
        <taxon>Hafniaceae</taxon>
        <taxon>Edwardsiella</taxon>
    </lineage>
</organism>
<feature type="chain" id="PRO_1000213681" description="Chaperone protein DnaJ">
    <location>
        <begin position="1"/>
        <end position="377"/>
    </location>
</feature>
<feature type="domain" description="J" evidence="1">
    <location>
        <begin position="5"/>
        <end position="70"/>
    </location>
</feature>
<feature type="repeat" description="CXXCXGXG motif">
    <location>
        <begin position="145"/>
        <end position="152"/>
    </location>
</feature>
<feature type="repeat" description="CXXCXGXG motif">
    <location>
        <begin position="162"/>
        <end position="169"/>
    </location>
</feature>
<feature type="repeat" description="CXXCXGXG motif">
    <location>
        <begin position="184"/>
        <end position="191"/>
    </location>
</feature>
<feature type="repeat" description="CXXCXGXG motif">
    <location>
        <begin position="198"/>
        <end position="205"/>
    </location>
</feature>
<feature type="zinc finger region" description="CR-type" evidence="1">
    <location>
        <begin position="132"/>
        <end position="210"/>
    </location>
</feature>
<feature type="binding site" evidence="1">
    <location>
        <position position="145"/>
    </location>
    <ligand>
        <name>Zn(2+)</name>
        <dbReference type="ChEBI" id="CHEBI:29105"/>
        <label>1</label>
    </ligand>
</feature>
<feature type="binding site" evidence="1">
    <location>
        <position position="148"/>
    </location>
    <ligand>
        <name>Zn(2+)</name>
        <dbReference type="ChEBI" id="CHEBI:29105"/>
        <label>1</label>
    </ligand>
</feature>
<feature type="binding site" evidence="1">
    <location>
        <position position="162"/>
    </location>
    <ligand>
        <name>Zn(2+)</name>
        <dbReference type="ChEBI" id="CHEBI:29105"/>
        <label>2</label>
    </ligand>
</feature>
<feature type="binding site" evidence="1">
    <location>
        <position position="165"/>
    </location>
    <ligand>
        <name>Zn(2+)</name>
        <dbReference type="ChEBI" id="CHEBI:29105"/>
        <label>2</label>
    </ligand>
</feature>
<feature type="binding site" evidence="1">
    <location>
        <position position="184"/>
    </location>
    <ligand>
        <name>Zn(2+)</name>
        <dbReference type="ChEBI" id="CHEBI:29105"/>
        <label>2</label>
    </ligand>
</feature>
<feature type="binding site" evidence="1">
    <location>
        <position position="187"/>
    </location>
    <ligand>
        <name>Zn(2+)</name>
        <dbReference type="ChEBI" id="CHEBI:29105"/>
        <label>2</label>
    </ligand>
</feature>
<feature type="binding site" evidence="1">
    <location>
        <position position="198"/>
    </location>
    <ligand>
        <name>Zn(2+)</name>
        <dbReference type="ChEBI" id="CHEBI:29105"/>
        <label>1</label>
    </ligand>
</feature>
<feature type="binding site" evidence="1">
    <location>
        <position position="201"/>
    </location>
    <ligand>
        <name>Zn(2+)</name>
        <dbReference type="ChEBI" id="CHEBI:29105"/>
        <label>1</label>
    </ligand>
</feature>
<sequence length="377" mass="41262">MAKKDYYEILGVSREADEREIKKAYKRLAMKYHPDRNQGDKEAEDKFKEIKEAYEILTDAQKRAAYDQYGHAAFEQGGMGGGGGGFGGGADFSDIFGDVFGDIFGGGRRQRAARGADLRYNMDLTLEEAVRGVTKEIRIPTLAECDVCHGSGAKKGSEPITCPTCHGAGQVQMRQGFFTVQQPCPHCHGRGTIIKDPCNKCHGHGRIEKSKTLSVKIPAGVDTGDRIRLAGEGEAGENGAPAGDLYVQVQVKAHPIFEREDNNLFCEVPINFAMAALGGEIEVPTLDGRVNLKIPAETQTGKMFRMRGRGVKSVRGGAQGDLLCRVVVETPVNLNDKQKQLLRELEESFGGPASDKNSPRSKRFFDGVKKFFDDLTR</sequence>
<gene>
    <name evidence="1" type="primary">dnaJ</name>
    <name type="ordered locus">NT01EI_0673</name>
</gene>
<comment type="function">
    <text evidence="1">Participates actively in the response to hyperosmotic and heat shock by preventing the aggregation of stress-denatured proteins and by disaggregating proteins, also in an autonomous, DnaK-independent fashion. Unfolded proteins bind initially to DnaJ; upon interaction with the DnaJ-bound protein, DnaK hydrolyzes its bound ATP, resulting in the formation of a stable complex. GrpE releases ADP from DnaK; ATP binding to DnaK triggers the release of the substrate protein, thus completing the reaction cycle. Several rounds of ATP-dependent interactions between DnaJ, DnaK and GrpE are required for fully efficient folding. Also involved, together with DnaK and GrpE, in the DNA replication of plasmids through activation of initiation proteins.</text>
</comment>
<comment type="cofactor">
    <cofactor evidence="1">
        <name>Zn(2+)</name>
        <dbReference type="ChEBI" id="CHEBI:29105"/>
    </cofactor>
    <text evidence="1">Binds 2 Zn(2+) ions per monomer.</text>
</comment>
<comment type="subunit">
    <text evidence="1">Homodimer.</text>
</comment>
<comment type="subcellular location">
    <subcellularLocation>
        <location evidence="1">Cytoplasm</location>
    </subcellularLocation>
</comment>
<comment type="domain">
    <text evidence="1">The J domain is necessary and sufficient to stimulate DnaK ATPase activity. Zinc center 1 plays an important role in the autonomous, DnaK-independent chaperone activity of DnaJ. Zinc center 2 is essential for interaction with DnaK and for DnaJ activity.</text>
</comment>
<comment type="similarity">
    <text evidence="1">Belongs to the DnaJ family.</text>
</comment>
<dbReference type="EMBL" id="CP001600">
    <property type="protein sequence ID" value="ACR67895.1"/>
    <property type="molecule type" value="Genomic_DNA"/>
</dbReference>
<dbReference type="RefSeq" id="WP_015870089.1">
    <property type="nucleotide sequence ID" value="NZ_CP169062.1"/>
</dbReference>
<dbReference type="SMR" id="C5B7L8"/>
<dbReference type="STRING" id="67780.B6E78_14025"/>
<dbReference type="GeneID" id="69537740"/>
<dbReference type="KEGG" id="eic:NT01EI_0673"/>
<dbReference type="PATRIC" id="fig|634503.3.peg.606"/>
<dbReference type="HOGENOM" id="CLU_017633_0_7_6"/>
<dbReference type="OrthoDB" id="9779889at2"/>
<dbReference type="Proteomes" id="UP000001485">
    <property type="component" value="Chromosome"/>
</dbReference>
<dbReference type="GO" id="GO:0005737">
    <property type="term" value="C:cytoplasm"/>
    <property type="evidence" value="ECO:0007669"/>
    <property type="project" value="UniProtKB-SubCell"/>
</dbReference>
<dbReference type="GO" id="GO:0005524">
    <property type="term" value="F:ATP binding"/>
    <property type="evidence" value="ECO:0007669"/>
    <property type="project" value="InterPro"/>
</dbReference>
<dbReference type="GO" id="GO:0031072">
    <property type="term" value="F:heat shock protein binding"/>
    <property type="evidence" value="ECO:0007669"/>
    <property type="project" value="InterPro"/>
</dbReference>
<dbReference type="GO" id="GO:0051082">
    <property type="term" value="F:unfolded protein binding"/>
    <property type="evidence" value="ECO:0007669"/>
    <property type="project" value="UniProtKB-UniRule"/>
</dbReference>
<dbReference type="GO" id="GO:0008270">
    <property type="term" value="F:zinc ion binding"/>
    <property type="evidence" value="ECO:0007669"/>
    <property type="project" value="UniProtKB-UniRule"/>
</dbReference>
<dbReference type="GO" id="GO:0051085">
    <property type="term" value="P:chaperone cofactor-dependent protein refolding"/>
    <property type="evidence" value="ECO:0007669"/>
    <property type="project" value="TreeGrafter"/>
</dbReference>
<dbReference type="GO" id="GO:0006260">
    <property type="term" value="P:DNA replication"/>
    <property type="evidence" value="ECO:0007669"/>
    <property type="project" value="UniProtKB-KW"/>
</dbReference>
<dbReference type="GO" id="GO:0042026">
    <property type="term" value="P:protein refolding"/>
    <property type="evidence" value="ECO:0007669"/>
    <property type="project" value="TreeGrafter"/>
</dbReference>
<dbReference type="GO" id="GO:0009408">
    <property type="term" value="P:response to heat"/>
    <property type="evidence" value="ECO:0007669"/>
    <property type="project" value="InterPro"/>
</dbReference>
<dbReference type="CDD" id="cd06257">
    <property type="entry name" value="DnaJ"/>
    <property type="match status" value="1"/>
</dbReference>
<dbReference type="CDD" id="cd10747">
    <property type="entry name" value="DnaJ_C"/>
    <property type="match status" value="1"/>
</dbReference>
<dbReference type="CDD" id="cd10719">
    <property type="entry name" value="DnaJ_zf"/>
    <property type="match status" value="1"/>
</dbReference>
<dbReference type="FunFam" id="1.10.287.110:FF:000003">
    <property type="entry name" value="Molecular chaperone DnaJ"/>
    <property type="match status" value="1"/>
</dbReference>
<dbReference type="FunFam" id="2.10.230.10:FF:000002">
    <property type="entry name" value="Molecular chaperone DnaJ"/>
    <property type="match status" value="1"/>
</dbReference>
<dbReference type="FunFam" id="2.60.260.20:FF:000004">
    <property type="entry name" value="Molecular chaperone DnaJ"/>
    <property type="match status" value="1"/>
</dbReference>
<dbReference type="Gene3D" id="1.10.287.110">
    <property type="entry name" value="DnaJ domain"/>
    <property type="match status" value="1"/>
</dbReference>
<dbReference type="Gene3D" id="2.10.230.10">
    <property type="entry name" value="Heat shock protein DnaJ, cysteine-rich domain"/>
    <property type="match status" value="1"/>
</dbReference>
<dbReference type="Gene3D" id="2.60.260.20">
    <property type="entry name" value="Urease metallochaperone UreE, N-terminal domain"/>
    <property type="match status" value="2"/>
</dbReference>
<dbReference type="HAMAP" id="MF_01152">
    <property type="entry name" value="DnaJ"/>
    <property type="match status" value="1"/>
</dbReference>
<dbReference type="InterPro" id="IPR012724">
    <property type="entry name" value="DnaJ"/>
</dbReference>
<dbReference type="InterPro" id="IPR002939">
    <property type="entry name" value="DnaJ_C"/>
</dbReference>
<dbReference type="InterPro" id="IPR001623">
    <property type="entry name" value="DnaJ_domain"/>
</dbReference>
<dbReference type="InterPro" id="IPR018253">
    <property type="entry name" value="DnaJ_domain_CS"/>
</dbReference>
<dbReference type="InterPro" id="IPR008971">
    <property type="entry name" value="HSP40/DnaJ_pept-bd"/>
</dbReference>
<dbReference type="InterPro" id="IPR001305">
    <property type="entry name" value="HSP_DnaJ_Cys-rich_dom"/>
</dbReference>
<dbReference type="InterPro" id="IPR036410">
    <property type="entry name" value="HSP_DnaJ_Cys-rich_dom_sf"/>
</dbReference>
<dbReference type="InterPro" id="IPR036869">
    <property type="entry name" value="J_dom_sf"/>
</dbReference>
<dbReference type="NCBIfam" id="TIGR02349">
    <property type="entry name" value="DnaJ_bact"/>
    <property type="match status" value="1"/>
</dbReference>
<dbReference type="NCBIfam" id="NF008035">
    <property type="entry name" value="PRK10767.1"/>
    <property type="match status" value="1"/>
</dbReference>
<dbReference type="PANTHER" id="PTHR43096:SF48">
    <property type="entry name" value="CHAPERONE PROTEIN DNAJ"/>
    <property type="match status" value="1"/>
</dbReference>
<dbReference type="PANTHER" id="PTHR43096">
    <property type="entry name" value="DNAJ HOMOLOG 1, MITOCHONDRIAL-RELATED"/>
    <property type="match status" value="1"/>
</dbReference>
<dbReference type="Pfam" id="PF00226">
    <property type="entry name" value="DnaJ"/>
    <property type="match status" value="1"/>
</dbReference>
<dbReference type="Pfam" id="PF01556">
    <property type="entry name" value="DnaJ_C"/>
    <property type="match status" value="1"/>
</dbReference>
<dbReference type="Pfam" id="PF00684">
    <property type="entry name" value="DnaJ_CXXCXGXG"/>
    <property type="match status" value="1"/>
</dbReference>
<dbReference type="PRINTS" id="PR00625">
    <property type="entry name" value="JDOMAIN"/>
</dbReference>
<dbReference type="SMART" id="SM00271">
    <property type="entry name" value="DnaJ"/>
    <property type="match status" value="1"/>
</dbReference>
<dbReference type="SUPFAM" id="SSF46565">
    <property type="entry name" value="Chaperone J-domain"/>
    <property type="match status" value="1"/>
</dbReference>
<dbReference type="SUPFAM" id="SSF57938">
    <property type="entry name" value="DnaJ/Hsp40 cysteine-rich domain"/>
    <property type="match status" value="1"/>
</dbReference>
<dbReference type="SUPFAM" id="SSF49493">
    <property type="entry name" value="HSP40/DnaJ peptide-binding domain"/>
    <property type="match status" value="2"/>
</dbReference>
<dbReference type="PROSITE" id="PS00636">
    <property type="entry name" value="DNAJ_1"/>
    <property type="match status" value="1"/>
</dbReference>
<dbReference type="PROSITE" id="PS50076">
    <property type="entry name" value="DNAJ_2"/>
    <property type="match status" value="1"/>
</dbReference>
<dbReference type="PROSITE" id="PS51188">
    <property type="entry name" value="ZF_CR"/>
    <property type="match status" value="1"/>
</dbReference>
<keyword id="KW-0143">Chaperone</keyword>
<keyword id="KW-0963">Cytoplasm</keyword>
<keyword id="KW-0235">DNA replication</keyword>
<keyword id="KW-0479">Metal-binding</keyword>
<keyword id="KW-0677">Repeat</keyword>
<keyword id="KW-0346">Stress response</keyword>
<keyword id="KW-0862">Zinc</keyword>
<keyword id="KW-0863">Zinc-finger</keyword>
<reference key="1">
    <citation type="submission" date="2009-03" db="EMBL/GenBank/DDBJ databases">
        <title>Complete genome sequence of Edwardsiella ictaluri 93-146.</title>
        <authorList>
            <person name="Williams M.L."/>
            <person name="Gillaspy A.F."/>
            <person name="Dyer D.W."/>
            <person name="Thune R.L."/>
            <person name="Waldbieser G.C."/>
            <person name="Schuster S.C."/>
            <person name="Gipson J."/>
            <person name="Zaitshik J."/>
            <person name="Landry C."/>
            <person name="Lawrence M.L."/>
        </authorList>
    </citation>
    <scope>NUCLEOTIDE SEQUENCE [LARGE SCALE GENOMIC DNA]</scope>
    <source>
        <strain>93-146</strain>
    </source>
</reference>
<accession>C5B7L8</accession>
<protein>
    <recommendedName>
        <fullName evidence="1">Chaperone protein DnaJ</fullName>
    </recommendedName>
</protein>
<proteinExistence type="inferred from homology"/>
<name>DNAJ_EDWI9</name>